<keyword id="KW-0085">Behavior</keyword>
<keyword id="KW-1003">Cell membrane</keyword>
<keyword id="KW-1015">Disulfide bond</keyword>
<keyword id="KW-0297">G-protein coupled receptor</keyword>
<keyword id="KW-0325">Glycoprotein</keyword>
<keyword id="KW-0449">Lipoprotein</keyword>
<keyword id="KW-0472">Membrane</keyword>
<keyword id="KW-0564">Palmitate</keyword>
<keyword id="KW-0675">Receptor</keyword>
<keyword id="KW-1185">Reference proteome</keyword>
<keyword id="KW-0807">Transducer</keyword>
<keyword id="KW-0812">Transmembrane</keyword>
<keyword id="KW-1133">Transmembrane helix</keyword>
<comment type="function">
    <text evidence="4 5">G-protein coupled opioid receptor that functions as a receptor for endogenous alpha-neoendorphins and dynorphins, but has low affinity for beta-endorphins. Also functions as a receptor for various synthetic opioids and for the psychoactive diterpene salvinorin A. Ligand binding causes a conformation change that triggers signaling via guanine nucleotide-binding proteins (G proteins) and modulates the activity of down-stream effectors, such as adenylate cyclase. Signaling leads to the inhibition of adenylate cyclase activity. Inhibits neurotransmitter release by reducing calcium ion currents and increasing potassium ion conductance. Plays a role in the perception of pain. Plays a role in mediating reduced physical activity upon treatment with synthetic opioids. Plays a role in the regulation of salivation in response to synthetic opioids. May play a role in arousal and regulation of autonomic and neuroendocrine functions.</text>
</comment>
<comment type="subunit">
    <text evidence="1">Interacts with NHERF1. Interacts with GABARAPL1 (By similarity).</text>
</comment>
<comment type="subcellular location">
    <subcellularLocation>
        <location evidence="4 5">Cell membrane</location>
        <topology evidence="4 5">Multi-pass membrane protein</topology>
    </subcellularLocation>
</comment>
<comment type="tissue specificity">
    <text evidence="4 5">Detected in brain (at protein level). Brain (neocortex, hippocampus, amygdala, medial habenula, hypothalamus, locus ceruleus, and parabrachial nucleus).</text>
</comment>
<comment type="disruption phenotype">
    <text evidence="5">Mice are born at the expected Mendelian rate and show no obvious phenotype. Mutant mice do not display analgesia after treatment with the synthetic agonist U-50,488H. Unlike wild-type mice, they do not show reduced locomotion and increased salivation in response to the synthetic agonist U-50,488H.</text>
</comment>
<comment type="similarity">
    <text evidence="3">Belongs to the G-protein coupled receptor 1 family.</text>
</comment>
<protein>
    <recommendedName>
        <fullName>Kappa-type opioid receptor</fullName>
        <shortName>K-OR-1</shortName>
        <shortName>KOR-1</shortName>
    </recommendedName>
    <alternativeName>
        <fullName>MSL-1</fullName>
    </alternativeName>
</protein>
<reference key="1">
    <citation type="journal article" date="1993" name="Proc. Natl. Acad. Sci. U.S.A.">
        <title>Cloning and functional comparison of kappa and delta opioid receptors from mouse brain.</title>
        <authorList>
            <person name="Yasuda K."/>
            <person name="Raynor K."/>
            <person name="Kong H."/>
            <person name="Breder C.D."/>
            <person name="Takeda J."/>
            <person name="Reisine T."/>
            <person name="Bell G.I."/>
        </authorList>
    </citation>
    <scope>NUCLEOTIDE SEQUENCE [MRNA]</scope>
    <scope>FUNCTION</scope>
    <scope>SUBCELLULAR LOCATION</scope>
    <scope>TISSUE SPECIFICITY</scope>
    <source>
        <tissue>Brain</tissue>
    </source>
</reference>
<reference key="2">
    <citation type="journal article" date="1994" name="Biochem. Biophys. Res. Commun.">
        <title>Structure and chromosomal mapping of genes for the mouse kappa-opioid receptor and an opioid receptor homologue (MOR-C).</title>
        <authorList>
            <person name="Nishi M."/>
            <person name="Takeshima H."/>
            <person name="Mori M."/>
            <person name="Nakagawara K."/>
            <person name="Takeuchi T."/>
        </authorList>
    </citation>
    <scope>NUCLEOTIDE SEQUENCE [GENOMIC DNA]</scope>
</reference>
<reference key="3">
    <citation type="journal article" date="1995" name="Biochem. Biophys. Res. Commun.">
        <title>Cloning and promoter mapping of mouse kappa opioid receptor gene.</title>
        <authorList>
            <person name="Liu H.C."/>
            <person name="Lu S."/>
            <person name="Augustin L.B."/>
            <person name="Felsheim R.F."/>
            <person name="Chen H.C."/>
            <person name="Loh H.H."/>
            <person name="Wei L.N."/>
        </authorList>
    </citation>
    <scope>NUCLEOTIDE SEQUENCE [GENOMIC DNA]</scope>
</reference>
<reference key="4">
    <citation type="journal article" date="1995" name="J. Neuroimmunol.">
        <title>Sequence of kappa-opioid receptor cDNA in the R1.1 thymoma cell line.</title>
        <authorList>
            <person name="Belkowski S.M."/>
            <person name="Zhu J."/>
            <person name="Liu-Chen L.Y."/>
            <person name="Eisenstein T.K."/>
            <person name="Adler M.W."/>
            <person name="Rogers T.J."/>
        </authorList>
    </citation>
    <scope>NUCLEOTIDE SEQUENCE [MRNA]</scope>
</reference>
<reference key="5">
    <citation type="journal article" date="1998" name="EMBO J.">
        <title>Disruption of the kappa-opioid receptor gene in mice enhances sensitivity to chemical visceral pain, impairs pharmacological actions of the selective kappa-agonist U-50,488H and attenuates morphine withdrawal.</title>
        <authorList>
            <person name="Simonin F."/>
            <person name="Valverde O."/>
            <person name="Smadja C."/>
            <person name="Slowe S."/>
            <person name="Kitchen I."/>
            <person name="Dierich A."/>
            <person name="Le Meur M."/>
            <person name="Roques B.P."/>
            <person name="Maldonado R."/>
            <person name="Kieffer B.L."/>
        </authorList>
    </citation>
    <scope>DISRUPTION PHENOTYPE</scope>
    <scope>FUNCTION</scope>
    <scope>SUBCELLULAR LOCATION</scope>
    <scope>TISSUE SPECIFICITY</scope>
</reference>
<dbReference type="EMBL" id="L11065">
    <property type="protein sequence ID" value="AAA39363.1"/>
    <property type="molecule type" value="mRNA"/>
</dbReference>
<dbReference type="EMBL" id="D31665">
    <property type="protein sequence ID" value="BAA06508.1"/>
    <property type="molecule type" value="Genomic_DNA"/>
</dbReference>
<dbReference type="EMBL" id="S77872">
    <property type="protein sequence ID" value="AAB34130.2"/>
    <property type="molecule type" value="Genomic_DNA"/>
</dbReference>
<dbReference type="EMBL" id="S77868">
    <property type="protein sequence ID" value="AAB34130.2"/>
    <property type="status" value="JOINED"/>
    <property type="molecule type" value="Genomic_DNA"/>
</dbReference>
<dbReference type="EMBL" id="S77869">
    <property type="protein sequence ID" value="AAB34130.2"/>
    <property type="status" value="JOINED"/>
    <property type="molecule type" value="Genomic_DNA"/>
</dbReference>
<dbReference type="EMBL" id="S81111">
    <property type="protein sequence ID" value="AAP32232.1"/>
    <property type="molecule type" value="mRNA"/>
</dbReference>
<dbReference type="CCDS" id="CCDS14809.1"/>
<dbReference type="PIR" id="A48227">
    <property type="entry name" value="A48227"/>
</dbReference>
<dbReference type="PIR" id="JC2434">
    <property type="entry name" value="JC2434"/>
</dbReference>
<dbReference type="RefSeq" id="NP_001191300.1">
    <property type="nucleotide sequence ID" value="NM_001204371.2"/>
</dbReference>
<dbReference type="RefSeq" id="NP_001305664.1">
    <property type="nucleotide sequence ID" value="NM_001318735.1"/>
</dbReference>
<dbReference type="RefSeq" id="NP_035141.1">
    <property type="nucleotide sequence ID" value="NM_011011.3"/>
</dbReference>
<dbReference type="SMR" id="P33534"/>
<dbReference type="FunCoup" id="P33534">
    <property type="interactions" value="568"/>
</dbReference>
<dbReference type="STRING" id="10090.ENSMUSP00000125105"/>
<dbReference type="BindingDB" id="P33534"/>
<dbReference type="ChEMBL" id="CHEMBL4329"/>
<dbReference type="DrugCentral" id="P33534"/>
<dbReference type="GuidetoPHARMACOLOGY" id="318"/>
<dbReference type="GlyCosmos" id="P33534">
    <property type="glycosylation" value="2 sites, No reported glycans"/>
</dbReference>
<dbReference type="GlyGen" id="P33534">
    <property type="glycosylation" value="3 sites"/>
</dbReference>
<dbReference type="iPTMnet" id="P33534"/>
<dbReference type="PhosphoSitePlus" id="P33534"/>
<dbReference type="SwissPalm" id="P33534"/>
<dbReference type="PaxDb" id="10090-ENSMUSP00000027038"/>
<dbReference type="Antibodypedia" id="11640">
    <property type="antibodies" value="396 antibodies from 37 providers"/>
</dbReference>
<dbReference type="DNASU" id="18387"/>
<dbReference type="Ensembl" id="ENSMUST00000027038.11">
    <property type="protein sequence ID" value="ENSMUSP00000027038.5"/>
    <property type="gene ID" value="ENSMUSG00000025905.15"/>
</dbReference>
<dbReference type="Ensembl" id="ENSMUST00000160339.2">
    <property type="protein sequence ID" value="ENSMUSP00000124030.2"/>
    <property type="gene ID" value="ENSMUSG00000025905.15"/>
</dbReference>
<dbReference type="Ensembl" id="ENSMUST00000160777.8">
    <property type="protein sequence ID" value="ENSMUSP00000125105.2"/>
    <property type="gene ID" value="ENSMUSG00000025905.15"/>
</dbReference>
<dbReference type="GeneID" id="18387"/>
<dbReference type="KEGG" id="mmu:18387"/>
<dbReference type="UCSC" id="uc007afo.2">
    <property type="organism name" value="mouse"/>
</dbReference>
<dbReference type="AGR" id="MGI:97439"/>
<dbReference type="CTD" id="4986"/>
<dbReference type="MGI" id="MGI:97439">
    <property type="gene designation" value="Oprk1"/>
</dbReference>
<dbReference type="VEuPathDB" id="HostDB:ENSMUSG00000025905"/>
<dbReference type="eggNOG" id="KOG3656">
    <property type="taxonomic scope" value="Eukaryota"/>
</dbReference>
<dbReference type="GeneTree" id="ENSGT00940000157341"/>
<dbReference type="HOGENOM" id="CLU_009579_8_1_1"/>
<dbReference type="InParanoid" id="P33534"/>
<dbReference type="OMA" id="DTFMKIC"/>
<dbReference type="OrthoDB" id="6076970at2759"/>
<dbReference type="PhylomeDB" id="P33534"/>
<dbReference type="TreeFam" id="TF315737"/>
<dbReference type="Reactome" id="R-MMU-375276">
    <property type="pathway name" value="Peptide ligand-binding receptors"/>
</dbReference>
<dbReference type="Reactome" id="R-MMU-418594">
    <property type="pathway name" value="G alpha (i) signalling events"/>
</dbReference>
<dbReference type="BioGRID-ORCS" id="18387">
    <property type="hits" value="3 hits in 78 CRISPR screens"/>
</dbReference>
<dbReference type="PRO" id="PR:P33534"/>
<dbReference type="Proteomes" id="UP000000589">
    <property type="component" value="Chromosome 1"/>
</dbReference>
<dbReference type="RNAct" id="P33534">
    <property type="molecule type" value="protein"/>
</dbReference>
<dbReference type="Bgee" id="ENSMUSG00000025905">
    <property type="expression patterns" value="Expressed in decidua basalis and 77 other cell types or tissues"/>
</dbReference>
<dbReference type="ExpressionAtlas" id="P33534">
    <property type="expression patterns" value="baseline and differential"/>
</dbReference>
<dbReference type="GO" id="GO:0043679">
    <property type="term" value="C:axon terminus"/>
    <property type="evidence" value="ECO:0007669"/>
    <property type="project" value="Ensembl"/>
</dbReference>
<dbReference type="GO" id="GO:0005829">
    <property type="term" value="C:cytosol"/>
    <property type="evidence" value="ECO:0007669"/>
    <property type="project" value="Ensembl"/>
</dbReference>
<dbReference type="GO" id="GO:0030425">
    <property type="term" value="C:dendrite"/>
    <property type="evidence" value="ECO:0007669"/>
    <property type="project" value="Ensembl"/>
</dbReference>
<dbReference type="GO" id="GO:0016020">
    <property type="term" value="C:membrane"/>
    <property type="evidence" value="ECO:0000250"/>
    <property type="project" value="UniProtKB"/>
</dbReference>
<dbReference type="GO" id="GO:0005739">
    <property type="term" value="C:mitochondrion"/>
    <property type="evidence" value="ECO:0007669"/>
    <property type="project" value="Ensembl"/>
</dbReference>
<dbReference type="GO" id="GO:0005654">
    <property type="term" value="C:nucleoplasm"/>
    <property type="evidence" value="ECO:0007669"/>
    <property type="project" value="Ensembl"/>
</dbReference>
<dbReference type="GO" id="GO:0043204">
    <property type="term" value="C:perikaryon"/>
    <property type="evidence" value="ECO:0007669"/>
    <property type="project" value="Ensembl"/>
</dbReference>
<dbReference type="GO" id="GO:0005886">
    <property type="term" value="C:plasma membrane"/>
    <property type="evidence" value="ECO:0000314"/>
    <property type="project" value="UniProtKB"/>
</dbReference>
<dbReference type="GO" id="GO:0045211">
    <property type="term" value="C:postsynaptic membrane"/>
    <property type="evidence" value="ECO:0007669"/>
    <property type="project" value="Ensembl"/>
</dbReference>
<dbReference type="GO" id="GO:0042734">
    <property type="term" value="C:presynaptic membrane"/>
    <property type="evidence" value="ECO:0007669"/>
    <property type="project" value="Ensembl"/>
</dbReference>
<dbReference type="GO" id="GO:0016529">
    <property type="term" value="C:sarcoplasmic reticulum"/>
    <property type="evidence" value="ECO:0007669"/>
    <property type="project" value="Ensembl"/>
</dbReference>
<dbReference type="GO" id="GO:0030672">
    <property type="term" value="C:synaptic vesicle membrane"/>
    <property type="evidence" value="ECO:0007669"/>
    <property type="project" value="Ensembl"/>
</dbReference>
<dbReference type="GO" id="GO:0030315">
    <property type="term" value="C:T-tubule"/>
    <property type="evidence" value="ECO:0007669"/>
    <property type="project" value="Ensembl"/>
</dbReference>
<dbReference type="GO" id="GO:0038048">
    <property type="term" value="F:dynorphin receptor activity"/>
    <property type="evidence" value="ECO:0000250"/>
    <property type="project" value="UniProtKB"/>
</dbReference>
<dbReference type="GO" id="GO:0004985">
    <property type="term" value="F:G protein-coupled opioid receptor activity"/>
    <property type="evidence" value="ECO:0000314"/>
    <property type="project" value="UniProtKB"/>
</dbReference>
<dbReference type="GO" id="GO:0033612">
    <property type="term" value="F:receptor serine/threonine kinase binding"/>
    <property type="evidence" value="ECO:0007669"/>
    <property type="project" value="Ensembl"/>
</dbReference>
<dbReference type="GO" id="GO:0031635">
    <property type="term" value="P:adenylate cyclase-inhibiting opioid receptor signaling pathway"/>
    <property type="evidence" value="ECO:0000250"/>
    <property type="project" value="UniProtKB"/>
</dbReference>
<dbReference type="GO" id="GO:0048148">
    <property type="term" value="P:behavioral response to cocaine"/>
    <property type="evidence" value="ECO:0007669"/>
    <property type="project" value="Ensembl"/>
</dbReference>
<dbReference type="GO" id="GO:0071333">
    <property type="term" value="P:cellular response to glucose stimulus"/>
    <property type="evidence" value="ECO:0007669"/>
    <property type="project" value="Ensembl"/>
</dbReference>
<dbReference type="GO" id="GO:0071222">
    <property type="term" value="P:cellular response to lipopolysaccharide"/>
    <property type="evidence" value="ECO:0007669"/>
    <property type="project" value="Ensembl"/>
</dbReference>
<dbReference type="GO" id="GO:1990708">
    <property type="term" value="P:conditioned place preference"/>
    <property type="evidence" value="ECO:0007669"/>
    <property type="project" value="Ensembl"/>
</dbReference>
<dbReference type="GO" id="GO:0051607">
    <property type="term" value="P:defense response to virus"/>
    <property type="evidence" value="ECO:0007669"/>
    <property type="project" value="Ensembl"/>
</dbReference>
<dbReference type="GO" id="GO:0042755">
    <property type="term" value="P:eating behavior"/>
    <property type="evidence" value="ECO:0007669"/>
    <property type="project" value="Ensembl"/>
</dbReference>
<dbReference type="GO" id="GO:0044849">
    <property type="term" value="P:estrous cycle"/>
    <property type="evidence" value="ECO:0007669"/>
    <property type="project" value="Ensembl"/>
</dbReference>
<dbReference type="GO" id="GO:0006955">
    <property type="term" value="P:immune response"/>
    <property type="evidence" value="ECO:0007669"/>
    <property type="project" value="Ensembl"/>
</dbReference>
<dbReference type="GO" id="GO:0007626">
    <property type="term" value="P:locomotory behavior"/>
    <property type="evidence" value="ECO:0000315"/>
    <property type="project" value="UniProtKB"/>
</dbReference>
<dbReference type="GO" id="GO:0042711">
    <property type="term" value="P:maternal behavior"/>
    <property type="evidence" value="ECO:0007669"/>
    <property type="project" value="Ensembl"/>
</dbReference>
<dbReference type="GO" id="GO:0033685">
    <property type="term" value="P:negative regulation of luteinizing hormone secretion"/>
    <property type="evidence" value="ECO:0007669"/>
    <property type="project" value="Ensembl"/>
</dbReference>
<dbReference type="GO" id="GO:0007200">
    <property type="term" value="P:phospholipase C-activating G protein-coupled receptor signaling pathway"/>
    <property type="evidence" value="ECO:0000250"/>
    <property type="project" value="UniProtKB"/>
</dbReference>
<dbReference type="GO" id="GO:0033603">
    <property type="term" value="P:positive regulation of dopamine secretion"/>
    <property type="evidence" value="ECO:0007669"/>
    <property type="project" value="Ensembl"/>
</dbReference>
<dbReference type="GO" id="GO:1904000">
    <property type="term" value="P:positive regulation of eating behavior"/>
    <property type="evidence" value="ECO:0007669"/>
    <property type="project" value="Ensembl"/>
</dbReference>
<dbReference type="GO" id="GO:1900745">
    <property type="term" value="P:positive regulation of p38MAPK cascade"/>
    <property type="evidence" value="ECO:0007669"/>
    <property type="project" value="Ensembl"/>
</dbReference>
<dbReference type="GO" id="GO:1901381">
    <property type="term" value="P:positive regulation of potassium ion transmembrane transport"/>
    <property type="evidence" value="ECO:0007669"/>
    <property type="project" value="Ensembl"/>
</dbReference>
<dbReference type="GO" id="GO:0046877">
    <property type="term" value="P:regulation of saliva secretion"/>
    <property type="evidence" value="ECO:0000315"/>
    <property type="project" value="UniProtKB"/>
</dbReference>
<dbReference type="GO" id="GO:1903937">
    <property type="term" value="P:response to acrylamide"/>
    <property type="evidence" value="ECO:0007669"/>
    <property type="project" value="Ensembl"/>
</dbReference>
<dbReference type="GO" id="GO:0043627">
    <property type="term" value="P:response to estrogen"/>
    <property type="evidence" value="ECO:0007669"/>
    <property type="project" value="Ensembl"/>
</dbReference>
<dbReference type="GO" id="GO:0045471">
    <property type="term" value="P:response to ethanol"/>
    <property type="evidence" value="ECO:0007669"/>
    <property type="project" value="Ensembl"/>
</dbReference>
<dbReference type="GO" id="GO:0032868">
    <property type="term" value="P:response to insulin"/>
    <property type="evidence" value="ECO:0007669"/>
    <property type="project" value="Ensembl"/>
</dbReference>
<dbReference type="GO" id="GO:0035094">
    <property type="term" value="P:response to nicotine"/>
    <property type="evidence" value="ECO:0007669"/>
    <property type="project" value="Ensembl"/>
</dbReference>
<dbReference type="GO" id="GO:0019233">
    <property type="term" value="P:sensory perception of pain"/>
    <property type="evidence" value="ECO:0000315"/>
    <property type="project" value="UniProtKB"/>
</dbReference>
<dbReference type="GO" id="GO:0050951">
    <property type="term" value="P:sensory perception of temperature stimulus"/>
    <property type="evidence" value="ECO:0007669"/>
    <property type="project" value="Ensembl"/>
</dbReference>
<dbReference type="CDD" id="cd15091">
    <property type="entry name" value="7tmA_Kappa_opioid_R"/>
    <property type="match status" value="1"/>
</dbReference>
<dbReference type="FunFam" id="1.20.1070.10:FF:000014">
    <property type="entry name" value="Kappa-type opioid receptor 1"/>
    <property type="match status" value="1"/>
</dbReference>
<dbReference type="Gene3D" id="1.20.1070.10">
    <property type="entry name" value="Rhodopsin 7-helix transmembrane proteins"/>
    <property type="match status" value="1"/>
</dbReference>
<dbReference type="InterPro" id="IPR000276">
    <property type="entry name" value="GPCR_Rhodpsn"/>
</dbReference>
<dbReference type="InterPro" id="IPR017452">
    <property type="entry name" value="GPCR_Rhodpsn_7TM"/>
</dbReference>
<dbReference type="InterPro" id="IPR000452">
    <property type="entry name" value="Kappa_opi_rcpt"/>
</dbReference>
<dbReference type="InterPro" id="IPR001418">
    <property type="entry name" value="Opioid_rcpt"/>
</dbReference>
<dbReference type="PANTHER" id="PTHR24229:SF1">
    <property type="entry name" value="KAPPA-TYPE OPIOID RECEPTOR"/>
    <property type="match status" value="1"/>
</dbReference>
<dbReference type="PANTHER" id="PTHR24229">
    <property type="entry name" value="NEUROPEPTIDES RECEPTOR"/>
    <property type="match status" value="1"/>
</dbReference>
<dbReference type="Pfam" id="PF00001">
    <property type="entry name" value="7tm_1"/>
    <property type="match status" value="1"/>
</dbReference>
<dbReference type="PRINTS" id="PR00237">
    <property type="entry name" value="GPCRRHODOPSN"/>
</dbReference>
<dbReference type="PRINTS" id="PR00532">
    <property type="entry name" value="KAPPAOPIOIDR"/>
</dbReference>
<dbReference type="PRINTS" id="PR00384">
    <property type="entry name" value="OPIOIDR"/>
</dbReference>
<dbReference type="SMART" id="SM01381">
    <property type="entry name" value="7TM_GPCR_Srsx"/>
    <property type="match status" value="1"/>
</dbReference>
<dbReference type="SUPFAM" id="SSF81321">
    <property type="entry name" value="Family A G protein-coupled receptor-like"/>
    <property type="match status" value="1"/>
</dbReference>
<dbReference type="PROSITE" id="PS00237">
    <property type="entry name" value="G_PROTEIN_RECEP_F1_1"/>
    <property type="match status" value="1"/>
</dbReference>
<dbReference type="PROSITE" id="PS50262">
    <property type="entry name" value="G_PROTEIN_RECEP_F1_2"/>
    <property type="match status" value="1"/>
</dbReference>
<name>OPRK_MOUSE</name>
<evidence type="ECO:0000250" key="1"/>
<evidence type="ECO:0000255" key="2"/>
<evidence type="ECO:0000255" key="3">
    <source>
        <dbReference type="PROSITE-ProRule" id="PRU00521"/>
    </source>
</evidence>
<evidence type="ECO:0000269" key="4">
    <source>
    </source>
</evidence>
<evidence type="ECO:0000269" key="5">
    <source>
    </source>
</evidence>
<evidence type="ECO:0000305" key="6"/>
<sequence>MESPIQIFRGDPGPTCSPSACLLPNSSSWFPNWAESDSNGSVGSEDQQLESAHISPAIPVIITAVYSVVFVVGLVGNSLVMFVIIRYTKMKTATNIYIFNLALADALVTTTMPFQSAVYLMNSWPFGDVLCKIVISIDYYNMFTSIFTLTMMSVDRYIAVCHPVKALDFRTPLKAKIINICIWLLASSVGISAIVLGGTKVREDVDVIECSLQFPDDEYSWWDLFMKICVFVFAFVIPVLIIIVCYTLMILRLKSVRLLSGSREKDRNLRRITKLVLVVVAVFIICWTPIHIFILVEALGSTSHSTAALSSYYFCIALGYTNSSLNPVLYAFLDENFKRCFRDFCFPIKMRMERQSTNRVRNTVQDPASMRDVGGMNKPV</sequence>
<gene>
    <name type="primary">Oprk1</name>
</gene>
<proteinExistence type="evidence at protein level"/>
<accession>P33534</accession>
<organism>
    <name type="scientific">Mus musculus</name>
    <name type="common">Mouse</name>
    <dbReference type="NCBI Taxonomy" id="10090"/>
    <lineage>
        <taxon>Eukaryota</taxon>
        <taxon>Metazoa</taxon>
        <taxon>Chordata</taxon>
        <taxon>Craniata</taxon>
        <taxon>Vertebrata</taxon>
        <taxon>Euteleostomi</taxon>
        <taxon>Mammalia</taxon>
        <taxon>Eutheria</taxon>
        <taxon>Euarchontoglires</taxon>
        <taxon>Glires</taxon>
        <taxon>Rodentia</taxon>
        <taxon>Myomorpha</taxon>
        <taxon>Muroidea</taxon>
        <taxon>Muridae</taxon>
        <taxon>Murinae</taxon>
        <taxon>Mus</taxon>
        <taxon>Mus</taxon>
    </lineage>
</organism>
<feature type="chain" id="PRO_0000069968" description="Kappa-type opioid receptor">
    <location>
        <begin position="1"/>
        <end position="380"/>
    </location>
</feature>
<feature type="topological domain" description="Extracellular" evidence="1">
    <location>
        <begin position="1"/>
        <end position="57"/>
    </location>
</feature>
<feature type="transmembrane region" description="Helical; Name=1" evidence="1">
    <location>
        <begin position="58"/>
        <end position="85"/>
    </location>
</feature>
<feature type="topological domain" description="Cytoplasmic" evidence="1">
    <location>
        <begin position="86"/>
        <end position="95"/>
    </location>
</feature>
<feature type="transmembrane region" description="Helical; Name=2" evidence="1">
    <location>
        <begin position="96"/>
        <end position="119"/>
    </location>
</feature>
<feature type="topological domain" description="Extracellular" evidence="1">
    <location>
        <begin position="120"/>
        <end position="132"/>
    </location>
</feature>
<feature type="transmembrane region" description="Helical; Name=3" evidence="1">
    <location>
        <begin position="133"/>
        <end position="154"/>
    </location>
</feature>
<feature type="topological domain" description="Cytoplasmic" evidence="1">
    <location>
        <begin position="155"/>
        <end position="173"/>
    </location>
</feature>
<feature type="transmembrane region" description="Helical; Name=4" evidence="1">
    <location>
        <begin position="174"/>
        <end position="196"/>
    </location>
</feature>
<feature type="topological domain" description="Extracellular" evidence="1">
    <location>
        <begin position="197"/>
        <end position="222"/>
    </location>
</feature>
<feature type="transmembrane region" description="Helical; Name=5" evidence="1">
    <location>
        <begin position="223"/>
        <end position="247"/>
    </location>
</feature>
<feature type="topological domain" description="Cytoplasmic" evidence="1">
    <location>
        <begin position="248"/>
        <end position="274"/>
    </location>
</feature>
<feature type="transmembrane region" description="Helical; Name=6" evidence="1">
    <location>
        <begin position="275"/>
        <end position="296"/>
    </location>
</feature>
<feature type="topological domain" description="Extracellular" evidence="1">
    <location>
        <begin position="297"/>
        <end position="311"/>
    </location>
</feature>
<feature type="transmembrane region" description="Helical; Name=7" evidence="1">
    <location>
        <begin position="312"/>
        <end position="333"/>
    </location>
</feature>
<feature type="topological domain" description="Cytoplasmic" evidence="1">
    <location>
        <begin position="334"/>
        <end position="380"/>
    </location>
</feature>
<feature type="lipid moiety-binding region" description="S-palmitoyl cysteine" evidence="2">
    <location>
        <position position="345"/>
    </location>
</feature>
<feature type="glycosylation site" description="N-linked (GlcNAc...) asparagine" evidence="1">
    <location>
        <position position="25"/>
    </location>
</feature>
<feature type="glycosylation site" description="N-linked (GlcNAc...) asparagine" evidence="1">
    <location>
        <position position="39"/>
    </location>
</feature>
<feature type="disulfide bond" evidence="3">
    <location>
        <begin position="131"/>
        <end position="210"/>
    </location>
</feature>
<feature type="sequence conflict" description="In Ref. 2; BAA06508." evidence="6" ref="2">
    <original>S</original>
    <variation>L</variation>
    <location>
        <position position="211"/>
    </location>
</feature>
<feature type="sequence conflict" description="In Ref. 2; BAA06508." evidence="6" ref="2">
    <original>F</original>
    <variation>V</variation>
    <location>
        <position position="231"/>
    </location>
</feature>